<accession>A8LH57</accession>
<proteinExistence type="inferred from homology"/>
<gene>
    <name evidence="1" type="primary">arc</name>
    <name type="ordered locus">Franean1_4882</name>
</gene>
<name>ARC_PARS2</name>
<protein>
    <recommendedName>
        <fullName evidence="1">Proteasome-associated ATPase</fullName>
    </recommendedName>
    <alternativeName>
        <fullName evidence="1">AAA ATPase forming ring-shaped complexes</fullName>
        <shortName evidence="1">ARC</shortName>
    </alternativeName>
    <alternativeName>
        <fullName evidence="1">Proteasomal ATPase</fullName>
    </alternativeName>
</protein>
<reference key="1">
    <citation type="journal article" date="2007" name="Genome Res.">
        <title>Genome characteristics of facultatively symbiotic Frankia sp. strains reflect host range and host plant biogeography.</title>
        <authorList>
            <person name="Normand P."/>
            <person name="Lapierre P."/>
            <person name="Tisa L.S."/>
            <person name="Gogarten J.P."/>
            <person name="Alloisio N."/>
            <person name="Bagnarol E."/>
            <person name="Bassi C.A."/>
            <person name="Berry A.M."/>
            <person name="Bickhart D.M."/>
            <person name="Choisne N."/>
            <person name="Couloux A."/>
            <person name="Cournoyer B."/>
            <person name="Cruveiller S."/>
            <person name="Daubin V."/>
            <person name="Demange N."/>
            <person name="Francino M.P."/>
            <person name="Goltsman E."/>
            <person name="Huang Y."/>
            <person name="Kopp O.R."/>
            <person name="Labarre L."/>
            <person name="Lapidus A."/>
            <person name="Lavire C."/>
            <person name="Marechal J."/>
            <person name="Martinez M."/>
            <person name="Mastronunzio J.E."/>
            <person name="Mullin B.C."/>
            <person name="Niemann J."/>
            <person name="Pujic P."/>
            <person name="Rawnsley T."/>
            <person name="Rouy Z."/>
            <person name="Schenowitz C."/>
            <person name="Sellstedt A."/>
            <person name="Tavares F."/>
            <person name="Tomkins J.P."/>
            <person name="Vallenet D."/>
            <person name="Valverde C."/>
            <person name="Wall L.G."/>
            <person name="Wang Y."/>
            <person name="Medigue C."/>
            <person name="Benson D.R."/>
        </authorList>
    </citation>
    <scope>NUCLEOTIDE SEQUENCE [LARGE SCALE GENOMIC DNA]</scope>
    <source>
        <strain>EAN1pec</strain>
    </source>
</reference>
<sequence length="601" mass="66589">MSGPRSGSGSGGSTGRPGDADSQRSAYEKEVHELTTQVTFLEEEVAMLRRRLSESPRQVRVLEERLAQVQVELQTATGQNDKLVATLREARDQIISLKEEVDRLAQPPSGYGVFIRGYDDGTVDVFTQGRKLRVTVSPNVEADVLQPGQEVMLNEALNVVEVRAFERQGEIVLLKEVLESGDRALVIGHTDEERVVMLAQPLLDGPIRAGDSLLIEPRSGYAFERIPKSEVEELVLEEVPDIGYEQIGGLKGQIESIRDAVELPFLYKELFLEHKLKPPKGVLLYGPPGCGKTLIAKAVANSLAKKVEAQTGQGSGRAFFLNIKGPELLNKYVGETERQIRLVFQRAREKASEGMPVIVFFDEMDSIFRTRGSGVSSDVENTIVPQLLSEIDGVEQLENVIVIGASNREDMIDPAILRPGRLDVKIKVERPDAEAAKDIFAKYVLPELPLHADDLAEHGGNREATCQGMIQRVVERMYAESEENRFLEVTYANGDKEVLYFKDFNSGAMIENIVARAKKMAVKDLIESGVRGLRMQHLLSACLDEFKENEDLPNTTNPDDWARISGKKGERIVYIRTLVTGTKGTEAGRSIDTIANTGQYL</sequence>
<feature type="chain" id="PRO_0000396984" description="Proteasome-associated ATPase">
    <location>
        <begin position="1"/>
        <end position="601"/>
    </location>
</feature>
<feature type="region of interest" description="Disordered" evidence="2">
    <location>
        <begin position="1"/>
        <end position="29"/>
    </location>
</feature>
<feature type="region of interest" description="Docks into pockets in the proteasome alpha-ring" evidence="1">
    <location>
        <begin position="600"/>
        <end position="601"/>
    </location>
</feature>
<feature type="coiled-coil region" evidence="1">
    <location>
        <begin position="19"/>
        <end position="106"/>
    </location>
</feature>
<feature type="compositionally biased region" description="Gly residues" evidence="2">
    <location>
        <begin position="1"/>
        <end position="15"/>
    </location>
</feature>
<feature type="compositionally biased region" description="Basic and acidic residues" evidence="2">
    <location>
        <begin position="18"/>
        <end position="29"/>
    </location>
</feature>
<feature type="binding site" evidence="1">
    <location>
        <begin position="289"/>
        <end position="294"/>
    </location>
    <ligand>
        <name>ATP</name>
        <dbReference type="ChEBI" id="CHEBI:30616"/>
    </ligand>
</feature>
<organism>
    <name type="scientific">Parafrankia sp. (strain EAN1pec)</name>
    <dbReference type="NCBI Taxonomy" id="298653"/>
    <lineage>
        <taxon>Bacteria</taxon>
        <taxon>Bacillati</taxon>
        <taxon>Actinomycetota</taxon>
        <taxon>Actinomycetes</taxon>
        <taxon>Frankiales</taxon>
        <taxon>Frankiaceae</taxon>
        <taxon>Parafrankia</taxon>
    </lineage>
</organism>
<dbReference type="EMBL" id="CP000820">
    <property type="protein sequence ID" value="ABW14247.1"/>
    <property type="molecule type" value="Genomic_DNA"/>
</dbReference>
<dbReference type="RefSeq" id="WP_020462365.1">
    <property type="nucleotide sequence ID" value="NC_009921.1"/>
</dbReference>
<dbReference type="SMR" id="A8LH57"/>
<dbReference type="STRING" id="298653.Franean1_4882"/>
<dbReference type="KEGG" id="fre:Franean1_4882"/>
<dbReference type="eggNOG" id="COG1222">
    <property type="taxonomic scope" value="Bacteria"/>
</dbReference>
<dbReference type="HOGENOM" id="CLU_036054_0_0_11"/>
<dbReference type="UniPathway" id="UPA00997"/>
<dbReference type="GO" id="GO:0000502">
    <property type="term" value="C:proteasome complex"/>
    <property type="evidence" value="ECO:0007669"/>
    <property type="project" value="UniProtKB-KW"/>
</dbReference>
<dbReference type="GO" id="GO:0005524">
    <property type="term" value="F:ATP binding"/>
    <property type="evidence" value="ECO:0007669"/>
    <property type="project" value="UniProtKB-UniRule"/>
</dbReference>
<dbReference type="GO" id="GO:0016887">
    <property type="term" value="F:ATP hydrolysis activity"/>
    <property type="evidence" value="ECO:0007669"/>
    <property type="project" value="UniProtKB-UniRule"/>
</dbReference>
<dbReference type="GO" id="GO:0019941">
    <property type="term" value="P:modification-dependent protein catabolic process"/>
    <property type="evidence" value="ECO:0007669"/>
    <property type="project" value="InterPro"/>
</dbReference>
<dbReference type="GO" id="GO:0010498">
    <property type="term" value="P:proteasomal protein catabolic process"/>
    <property type="evidence" value="ECO:0007669"/>
    <property type="project" value="InterPro"/>
</dbReference>
<dbReference type="FunFam" id="3.40.50.300:FF:001025">
    <property type="entry name" value="ATPase family, AAA domain-containing 2B"/>
    <property type="match status" value="1"/>
</dbReference>
<dbReference type="Gene3D" id="1.10.8.60">
    <property type="match status" value="1"/>
</dbReference>
<dbReference type="Gene3D" id="1.20.5.170">
    <property type="match status" value="1"/>
</dbReference>
<dbReference type="Gene3D" id="2.40.50.140">
    <property type="entry name" value="Nucleic acid-binding proteins"/>
    <property type="match status" value="2"/>
</dbReference>
<dbReference type="Gene3D" id="3.40.50.300">
    <property type="entry name" value="P-loop containing nucleotide triphosphate hydrolases"/>
    <property type="match status" value="1"/>
</dbReference>
<dbReference type="HAMAP" id="MF_02112">
    <property type="entry name" value="ARC_ATPase"/>
    <property type="match status" value="1"/>
</dbReference>
<dbReference type="InterPro" id="IPR003593">
    <property type="entry name" value="AAA+_ATPase"/>
</dbReference>
<dbReference type="InterPro" id="IPR050168">
    <property type="entry name" value="AAA_ATPase_domain"/>
</dbReference>
<dbReference type="InterPro" id="IPR003959">
    <property type="entry name" value="ATPase_AAA_core"/>
</dbReference>
<dbReference type="InterPro" id="IPR003960">
    <property type="entry name" value="ATPase_AAA_CS"/>
</dbReference>
<dbReference type="InterPro" id="IPR012340">
    <property type="entry name" value="NA-bd_OB-fold"/>
</dbReference>
<dbReference type="InterPro" id="IPR027417">
    <property type="entry name" value="P-loop_NTPase"/>
</dbReference>
<dbReference type="InterPro" id="IPR032501">
    <property type="entry name" value="Prot_ATP_ID_OB_2nd"/>
</dbReference>
<dbReference type="InterPro" id="IPR041626">
    <property type="entry name" value="Prot_ATP_ID_OB_N"/>
</dbReference>
<dbReference type="InterPro" id="IPR022482">
    <property type="entry name" value="Proteasome_ATPase"/>
</dbReference>
<dbReference type="NCBIfam" id="TIGR03689">
    <property type="entry name" value="pup_AAA"/>
    <property type="match status" value="1"/>
</dbReference>
<dbReference type="PANTHER" id="PTHR23077">
    <property type="entry name" value="AAA-FAMILY ATPASE"/>
    <property type="match status" value="1"/>
</dbReference>
<dbReference type="PANTHER" id="PTHR23077:SF144">
    <property type="entry name" value="PROTEASOME-ASSOCIATED ATPASE"/>
    <property type="match status" value="1"/>
</dbReference>
<dbReference type="Pfam" id="PF00004">
    <property type="entry name" value="AAA"/>
    <property type="match status" value="1"/>
</dbReference>
<dbReference type="Pfam" id="PF16450">
    <property type="entry name" value="Prot_ATP_ID_OB_C"/>
    <property type="match status" value="1"/>
</dbReference>
<dbReference type="Pfam" id="PF17758">
    <property type="entry name" value="Prot_ATP_ID_OB_N"/>
    <property type="match status" value="1"/>
</dbReference>
<dbReference type="SMART" id="SM00382">
    <property type="entry name" value="AAA"/>
    <property type="match status" value="1"/>
</dbReference>
<dbReference type="SUPFAM" id="SSF52540">
    <property type="entry name" value="P-loop containing nucleoside triphosphate hydrolases"/>
    <property type="match status" value="1"/>
</dbReference>
<dbReference type="PROSITE" id="PS00674">
    <property type="entry name" value="AAA"/>
    <property type="match status" value="1"/>
</dbReference>
<keyword id="KW-0067">ATP-binding</keyword>
<keyword id="KW-0143">Chaperone</keyword>
<keyword id="KW-0175">Coiled coil</keyword>
<keyword id="KW-0547">Nucleotide-binding</keyword>
<keyword id="KW-0647">Proteasome</keyword>
<comment type="function">
    <text evidence="1">ATPase which is responsible for recognizing, binding, unfolding and translocation of pupylated proteins into the bacterial 20S proteasome core particle. May be essential for opening the gate of the 20S proteasome via an interaction with its C-terminus, thereby allowing substrate entry and access to the site of proteolysis. Thus, the C-termini of the proteasomal ATPase may function like a 'key in a lock' to induce gate opening and therefore regulate proteolysis.</text>
</comment>
<comment type="pathway">
    <text evidence="1">Protein degradation; proteasomal Pup-dependent pathway.</text>
</comment>
<comment type="subunit">
    <text evidence="1">Homohexamer. Assembles into a hexameric ring structure that caps the 20S proteasome core. Strongly interacts with the prokaryotic ubiquitin-like protein Pup through a hydrophobic interface; the interacting region of ARC lies in its N-terminal coiled-coil domain. There is one Pup binding site per ARC hexamer ring. Upon ATP-binding, the C-terminus of ARC interacts with the alpha-rings of the proteasome core, possibly by binding to the intersubunit pockets.</text>
</comment>
<comment type="domain">
    <text evidence="1">Consists of three main regions, an N-terminal coiled-coil domain that binds to protein Pup and functions as a docking station, an interdomain involved in ARC hexamerization, and a C-terminal ATPase domain of the AAA type.</text>
</comment>
<comment type="similarity">
    <text evidence="1">Belongs to the AAA ATPase family.</text>
</comment>
<evidence type="ECO:0000255" key="1">
    <source>
        <dbReference type="HAMAP-Rule" id="MF_02112"/>
    </source>
</evidence>
<evidence type="ECO:0000256" key="2">
    <source>
        <dbReference type="SAM" id="MobiDB-lite"/>
    </source>
</evidence>